<feature type="signal peptide" evidence="1">
    <location>
        <begin position="1"/>
        <end position="18"/>
    </location>
</feature>
<feature type="propeptide" id="PRO_0000461965" evidence="5">
    <location>
        <begin position="19"/>
        <end position="57"/>
    </location>
</feature>
<feature type="peptide" id="PRO_5003038892" description="Arminin 1a" evidence="5">
    <location>
        <begin position="58"/>
        <end position="85"/>
    </location>
</feature>
<feature type="modified residue" description="Valine amide" evidence="5">
    <location>
        <position position="85"/>
    </location>
</feature>
<sequence length="88" mass="10509">MKTVLAFLFLPFIAFTHAESYEDVKEEIKNEAEKEIFEDLEEESDALDSSVREFNDAKPWRFRRAIRRVRWRKVAPYIPFVVKTVGKK</sequence>
<evidence type="ECO:0000255" key="1"/>
<evidence type="ECO:0000269" key="2">
    <source>
    </source>
</evidence>
<evidence type="ECO:0000303" key="3">
    <source>
    </source>
</evidence>
<evidence type="ECO:0000305" key="4"/>
<evidence type="ECO:0000305" key="5">
    <source>
    </source>
</evidence>
<evidence type="ECO:0000312" key="6">
    <source>
        <dbReference type="EMBL" id="ADB56977.1"/>
    </source>
</evidence>
<reference evidence="6" key="1">
    <citation type="journal article" date="2009" name="Antimicrob. Agents Chemother.">
        <title>Activity of the novel peptide arminin against multiresistant human pathogens shows the considerable potential of phylogenetically ancient organisms as drug sources.</title>
        <authorList>
            <person name="Augustin R."/>
            <person name="Anton-Erxleben F."/>
            <person name="Jungnickel S."/>
            <person name="Hemmrich G."/>
            <person name="Spudy B."/>
            <person name="Podschun R."/>
            <person name="Bosch T.C."/>
        </authorList>
    </citation>
    <scope>NUCLEOTIDE SEQUENCE [MRNA]</scope>
    <scope>FUNCTION</scope>
    <scope>TISSUE SPECIFICITY</scope>
    <scope>RECOMBINANT EXPRESSION</scope>
    <scope>PROBABLE AMIDATION AT VAL-85</scope>
    <source>
        <strain>AEP</strain>
    </source>
</reference>
<dbReference type="EMBL" id="GU256274">
    <property type="protein sequence ID" value="ADB56977.1"/>
    <property type="molecule type" value="mRNA"/>
</dbReference>
<dbReference type="Proteomes" id="UP000694840">
    <property type="component" value="Unplaced"/>
</dbReference>
<dbReference type="GO" id="GO:0005576">
    <property type="term" value="C:extracellular region"/>
    <property type="evidence" value="ECO:0007669"/>
    <property type="project" value="UniProtKB-SubCell"/>
</dbReference>
<organism>
    <name type="scientific">Hydra vulgaris</name>
    <name type="common">Hydra</name>
    <name type="synonym">Hydra attenuata</name>
    <dbReference type="NCBI Taxonomy" id="6087"/>
    <lineage>
        <taxon>Eukaryota</taxon>
        <taxon>Metazoa</taxon>
        <taxon>Cnidaria</taxon>
        <taxon>Hydrozoa</taxon>
        <taxon>Hydroidolina</taxon>
        <taxon>Anthoathecata</taxon>
        <taxon>Aplanulata</taxon>
        <taxon>Hydridae</taxon>
        <taxon>Hydra</taxon>
    </lineage>
</organism>
<protein>
    <recommendedName>
        <fullName evidence="3">Arminin 1a</fullName>
    </recommendedName>
</protein>
<accession>D2XUU4</accession>
<keyword id="KW-0027">Amidation</keyword>
<keyword id="KW-0044">Antibiotic</keyword>
<keyword id="KW-0929">Antimicrobial</keyword>
<keyword id="KW-0391">Immunity</keyword>
<keyword id="KW-0399">Innate immunity</keyword>
<keyword id="KW-0472">Membrane</keyword>
<keyword id="KW-1185">Reference proteome</keyword>
<keyword id="KW-0964">Secreted</keyword>
<keyword id="KW-0732">Signal</keyword>
<keyword id="KW-1052">Target cell membrane</keyword>
<keyword id="KW-1053">Target membrane</keyword>
<comment type="function">
    <text evidence="2">Antimicrobial peptide with a broad-spectrum antimicrobial activity. Shows very strong bactericidal activity against B.megaterium (MBC=0.1 uM), E.coli (MBC=0.2 uM), S.aureus (MBC=0.4 uM), methicillin-resistant S.aureus (MRSA) (MBC=0.4-0.8 uM), vancomycin-resistant enterococci (VRE) (E.faecalis (MBC=1.6 uM), and E.faecium (MBC=0.4-0.8 uM)), and extended-spectrum beta-lactamase (ESBL)-producing enterobacteriaceae strains (K.pneumoniae (MBC=0.4-0.8 uM), E.coli (MBC=0.2-0.4 uM)). Keeps its antibacterial activity under a wide range of salt concentrations that mimic physiological conditions of human blood, which is surprising, since Hydra is an obligate freshwater animal with nearly no salt tolerance. Does not affect red blood cells.</text>
</comment>
<comment type="subcellular location">
    <subcellularLocation>
        <location evidence="2">Secreted</location>
    </subcellularLocation>
    <subcellularLocation>
        <location evidence="5">Target cell membrane</location>
    </subcellularLocation>
</comment>
<comment type="tissue specificity">
    <text evidence="2">Expressed in entodermal epithelium along the body column.</text>
</comment>
<comment type="similarity">
    <text evidence="4">Belongs to the arminin family.</text>
</comment>
<proteinExistence type="evidence at protein level"/>
<name>ARM1A_HYDVU</name>